<organism>
    <name type="scientific">Streptococcus pneumoniae (strain P1031)</name>
    <dbReference type="NCBI Taxonomy" id="488223"/>
    <lineage>
        <taxon>Bacteria</taxon>
        <taxon>Bacillati</taxon>
        <taxon>Bacillota</taxon>
        <taxon>Bacilli</taxon>
        <taxon>Lactobacillales</taxon>
        <taxon>Streptococcaceae</taxon>
        <taxon>Streptococcus</taxon>
    </lineage>
</organism>
<feature type="chain" id="PRO_1000201491" description="Elongation factor G">
    <location>
        <begin position="1"/>
        <end position="693"/>
    </location>
</feature>
<feature type="domain" description="tr-type G">
    <location>
        <begin position="8"/>
        <end position="282"/>
    </location>
</feature>
<feature type="binding site" evidence="1">
    <location>
        <begin position="17"/>
        <end position="24"/>
    </location>
    <ligand>
        <name>GTP</name>
        <dbReference type="ChEBI" id="CHEBI:37565"/>
    </ligand>
</feature>
<feature type="binding site" evidence="1">
    <location>
        <begin position="81"/>
        <end position="85"/>
    </location>
    <ligand>
        <name>GTP</name>
        <dbReference type="ChEBI" id="CHEBI:37565"/>
    </ligand>
</feature>
<feature type="binding site" evidence="1">
    <location>
        <begin position="135"/>
        <end position="138"/>
    </location>
    <ligand>
        <name>GTP</name>
        <dbReference type="ChEBI" id="CHEBI:37565"/>
    </ligand>
</feature>
<accession>C1CIF3</accession>
<gene>
    <name evidence="1" type="primary">fusA</name>
    <name type="ordered locus">SPP_0322</name>
</gene>
<evidence type="ECO:0000255" key="1">
    <source>
        <dbReference type="HAMAP-Rule" id="MF_00054"/>
    </source>
</evidence>
<comment type="function">
    <text evidence="1">Catalyzes the GTP-dependent ribosomal translocation step during translation elongation. During this step, the ribosome changes from the pre-translocational (PRE) to the post-translocational (POST) state as the newly formed A-site-bound peptidyl-tRNA and P-site-bound deacylated tRNA move to the P and E sites, respectively. Catalyzes the coordinated movement of the two tRNA molecules, the mRNA and conformational changes in the ribosome.</text>
</comment>
<comment type="subcellular location">
    <subcellularLocation>
        <location evidence="1">Cytoplasm</location>
    </subcellularLocation>
</comment>
<comment type="similarity">
    <text evidence="1">Belongs to the TRAFAC class translation factor GTPase superfamily. Classic translation factor GTPase family. EF-G/EF-2 subfamily.</text>
</comment>
<name>EFG_STRZP</name>
<dbReference type="EMBL" id="CP000920">
    <property type="protein sequence ID" value="ACO21050.1"/>
    <property type="molecule type" value="Genomic_DNA"/>
</dbReference>
<dbReference type="RefSeq" id="WP_000090356.1">
    <property type="nucleotide sequence ID" value="NC_012467.1"/>
</dbReference>
<dbReference type="SMR" id="C1CIF3"/>
<dbReference type="KEGG" id="spp:SPP_0322"/>
<dbReference type="HOGENOM" id="CLU_002794_4_1_9"/>
<dbReference type="GO" id="GO:0005737">
    <property type="term" value="C:cytoplasm"/>
    <property type="evidence" value="ECO:0007669"/>
    <property type="project" value="UniProtKB-SubCell"/>
</dbReference>
<dbReference type="GO" id="GO:0005525">
    <property type="term" value="F:GTP binding"/>
    <property type="evidence" value="ECO:0007669"/>
    <property type="project" value="UniProtKB-UniRule"/>
</dbReference>
<dbReference type="GO" id="GO:0003924">
    <property type="term" value="F:GTPase activity"/>
    <property type="evidence" value="ECO:0007669"/>
    <property type="project" value="InterPro"/>
</dbReference>
<dbReference type="GO" id="GO:0003746">
    <property type="term" value="F:translation elongation factor activity"/>
    <property type="evidence" value="ECO:0007669"/>
    <property type="project" value="UniProtKB-UniRule"/>
</dbReference>
<dbReference type="GO" id="GO:0032790">
    <property type="term" value="P:ribosome disassembly"/>
    <property type="evidence" value="ECO:0007669"/>
    <property type="project" value="TreeGrafter"/>
</dbReference>
<dbReference type="CDD" id="cd01886">
    <property type="entry name" value="EF-G"/>
    <property type="match status" value="1"/>
</dbReference>
<dbReference type="CDD" id="cd16262">
    <property type="entry name" value="EFG_III"/>
    <property type="match status" value="1"/>
</dbReference>
<dbReference type="CDD" id="cd01434">
    <property type="entry name" value="EFG_mtEFG1_IV"/>
    <property type="match status" value="1"/>
</dbReference>
<dbReference type="CDD" id="cd03713">
    <property type="entry name" value="EFG_mtEFG_C"/>
    <property type="match status" value="1"/>
</dbReference>
<dbReference type="CDD" id="cd04088">
    <property type="entry name" value="EFG_mtEFG_II"/>
    <property type="match status" value="1"/>
</dbReference>
<dbReference type="FunFam" id="2.40.30.10:FF:000006">
    <property type="entry name" value="Elongation factor G"/>
    <property type="match status" value="1"/>
</dbReference>
<dbReference type="FunFam" id="3.30.230.10:FF:000003">
    <property type="entry name" value="Elongation factor G"/>
    <property type="match status" value="1"/>
</dbReference>
<dbReference type="FunFam" id="3.30.70.240:FF:000001">
    <property type="entry name" value="Elongation factor G"/>
    <property type="match status" value="1"/>
</dbReference>
<dbReference type="FunFam" id="3.30.70.870:FF:000001">
    <property type="entry name" value="Elongation factor G"/>
    <property type="match status" value="1"/>
</dbReference>
<dbReference type="FunFam" id="3.40.50.300:FF:000029">
    <property type="entry name" value="Elongation factor G"/>
    <property type="match status" value="1"/>
</dbReference>
<dbReference type="Gene3D" id="3.30.230.10">
    <property type="match status" value="1"/>
</dbReference>
<dbReference type="Gene3D" id="3.30.70.240">
    <property type="match status" value="1"/>
</dbReference>
<dbReference type="Gene3D" id="3.30.70.870">
    <property type="entry name" value="Elongation Factor G (Translational Gtpase), domain 3"/>
    <property type="match status" value="1"/>
</dbReference>
<dbReference type="Gene3D" id="3.40.50.300">
    <property type="entry name" value="P-loop containing nucleotide triphosphate hydrolases"/>
    <property type="match status" value="1"/>
</dbReference>
<dbReference type="Gene3D" id="2.40.30.10">
    <property type="entry name" value="Translation factors"/>
    <property type="match status" value="1"/>
</dbReference>
<dbReference type="HAMAP" id="MF_00054_B">
    <property type="entry name" value="EF_G_EF_2_B"/>
    <property type="match status" value="1"/>
</dbReference>
<dbReference type="InterPro" id="IPR053905">
    <property type="entry name" value="EF-G-like_DII"/>
</dbReference>
<dbReference type="InterPro" id="IPR041095">
    <property type="entry name" value="EFG_II"/>
</dbReference>
<dbReference type="InterPro" id="IPR009022">
    <property type="entry name" value="EFG_III"/>
</dbReference>
<dbReference type="InterPro" id="IPR035647">
    <property type="entry name" value="EFG_III/V"/>
</dbReference>
<dbReference type="InterPro" id="IPR047872">
    <property type="entry name" value="EFG_IV"/>
</dbReference>
<dbReference type="InterPro" id="IPR035649">
    <property type="entry name" value="EFG_V"/>
</dbReference>
<dbReference type="InterPro" id="IPR000640">
    <property type="entry name" value="EFG_V-like"/>
</dbReference>
<dbReference type="InterPro" id="IPR031157">
    <property type="entry name" value="G_TR_CS"/>
</dbReference>
<dbReference type="InterPro" id="IPR027417">
    <property type="entry name" value="P-loop_NTPase"/>
</dbReference>
<dbReference type="InterPro" id="IPR020568">
    <property type="entry name" value="Ribosomal_Su5_D2-typ_SF"/>
</dbReference>
<dbReference type="InterPro" id="IPR014721">
    <property type="entry name" value="Ribsml_uS5_D2-typ_fold_subgr"/>
</dbReference>
<dbReference type="InterPro" id="IPR005225">
    <property type="entry name" value="Small_GTP-bd"/>
</dbReference>
<dbReference type="InterPro" id="IPR000795">
    <property type="entry name" value="T_Tr_GTP-bd_dom"/>
</dbReference>
<dbReference type="InterPro" id="IPR009000">
    <property type="entry name" value="Transl_B-barrel_sf"/>
</dbReference>
<dbReference type="InterPro" id="IPR004540">
    <property type="entry name" value="Transl_elong_EFG/EF2"/>
</dbReference>
<dbReference type="InterPro" id="IPR005517">
    <property type="entry name" value="Transl_elong_EFG/EF2_IV"/>
</dbReference>
<dbReference type="NCBIfam" id="TIGR00484">
    <property type="entry name" value="EF-G"/>
    <property type="match status" value="1"/>
</dbReference>
<dbReference type="NCBIfam" id="NF009379">
    <property type="entry name" value="PRK12740.1-3"/>
    <property type="match status" value="1"/>
</dbReference>
<dbReference type="NCBIfam" id="NF009381">
    <property type="entry name" value="PRK12740.1-5"/>
    <property type="match status" value="1"/>
</dbReference>
<dbReference type="NCBIfam" id="TIGR00231">
    <property type="entry name" value="small_GTP"/>
    <property type="match status" value="1"/>
</dbReference>
<dbReference type="PANTHER" id="PTHR43261:SF1">
    <property type="entry name" value="RIBOSOME-RELEASING FACTOR 2, MITOCHONDRIAL"/>
    <property type="match status" value="1"/>
</dbReference>
<dbReference type="PANTHER" id="PTHR43261">
    <property type="entry name" value="TRANSLATION ELONGATION FACTOR G-RELATED"/>
    <property type="match status" value="1"/>
</dbReference>
<dbReference type="Pfam" id="PF22042">
    <property type="entry name" value="EF-G_D2"/>
    <property type="match status" value="1"/>
</dbReference>
<dbReference type="Pfam" id="PF00679">
    <property type="entry name" value="EFG_C"/>
    <property type="match status" value="1"/>
</dbReference>
<dbReference type="Pfam" id="PF14492">
    <property type="entry name" value="EFG_III"/>
    <property type="match status" value="1"/>
</dbReference>
<dbReference type="Pfam" id="PF03764">
    <property type="entry name" value="EFG_IV"/>
    <property type="match status" value="1"/>
</dbReference>
<dbReference type="Pfam" id="PF00009">
    <property type="entry name" value="GTP_EFTU"/>
    <property type="match status" value="1"/>
</dbReference>
<dbReference type="PRINTS" id="PR00315">
    <property type="entry name" value="ELONGATNFCT"/>
</dbReference>
<dbReference type="SMART" id="SM00838">
    <property type="entry name" value="EFG_C"/>
    <property type="match status" value="1"/>
</dbReference>
<dbReference type="SMART" id="SM00889">
    <property type="entry name" value="EFG_IV"/>
    <property type="match status" value="1"/>
</dbReference>
<dbReference type="SUPFAM" id="SSF54980">
    <property type="entry name" value="EF-G C-terminal domain-like"/>
    <property type="match status" value="2"/>
</dbReference>
<dbReference type="SUPFAM" id="SSF52540">
    <property type="entry name" value="P-loop containing nucleoside triphosphate hydrolases"/>
    <property type="match status" value="1"/>
</dbReference>
<dbReference type="SUPFAM" id="SSF54211">
    <property type="entry name" value="Ribosomal protein S5 domain 2-like"/>
    <property type="match status" value="1"/>
</dbReference>
<dbReference type="SUPFAM" id="SSF50447">
    <property type="entry name" value="Translation proteins"/>
    <property type="match status" value="1"/>
</dbReference>
<dbReference type="PROSITE" id="PS00301">
    <property type="entry name" value="G_TR_1"/>
    <property type="match status" value="1"/>
</dbReference>
<dbReference type="PROSITE" id="PS51722">
    <property type="entry name" value="G_TR_2"/>
    <property type="match status" value="1"/>
</dbReference>
<protein>
    <recommendedName>
        <fullName evidence="1">Elongation factor G</fullName>
        <shortName evidence="1">EF-G</shortName>
    </recommendedName>
</protein>
<proteinExistence type="inferred from homology"/>
<sequence length="693" mass="76803">MAREFSLEKTRNIGIMAHVDAGKTTTTERILYYTGKIHKIGETHEGASQMDWMEQEQERGITITSAATTAQWNNHRVNIIDTPGHVDFTIEVQRSLRVLDGAVTVLDSQSGVEPQTETVWRQATEYGVPRIVFANKMDKIGADFLYSVSTLHDRLQANAHPIQLPIGSEDDFRGIIDLIKMKAEIYTNDLGTDILEEDIPAEYLDQAQEYREKLVEAVAETDEELMMKYLEGEEITNEELKAGIRKATINVEFFPVLCGSAFKNKGVQLMLDAVIDYLPSPLDIPAIKGINPDTDAEETRPASDEEPFAALAFKIMTDPFVGRLTFFRVYSGVLQSGSYVLNTSKGKRERIGRILQMHANSRQEIETVYSGDIAAAVGLKDTTTGDSLTDEKAKIILESINVPEPVIQLMVEPKSKADQDKMGIALQKLAEEDPTFRVETNVETGETVISGMGELHLDVLVDRMRREFKVEANVGAPQVSYRETFRASTQARGFFKRQSGGKGQFGDVWIEFTPNEEGKGFEFENAIVGGVVPREFIPAVEKGLVESMANGVLAGYPMVDVKAKLYDGSYHDVDSSETAFKIAASLALKEAAKSAQPAILEPMMLVTITVPEENLGDVMGHVTARRGRVDGMEAHGNSQIVRAYVPLAEMFGYATVLRSASQGRGTFMMVFDHYEDVPKSVQEEIIKKNKGED</sequence>
<reference key="1">
    <citation type="journal article" date="2010" name="Genome Biol.">
        <title>Structure and dynamics of the pan-genome of Streptococcus pneumoniae and closely related species.</title>
        <authorList>
            <person name="Donati C."/>
            <person name="Hiller N.L."/>
            <person name="Tettelin H."/>
            <person name="Muzzi A."/>
            <person name="Croucher N.J."/>
            <person name="Angiuoli S.V."/>
            <person name="Oggioni M."/>
            <person name="Dunning Hotopp J.C."/>
            <person name="Hu F.Z."/>
            <person name="Riley D.R."/>
            <person name="Covacci A."/>
            <person name="Mitchell T.J."/>
            <person name="Bentley S.D."/>
            <person name="Kilian M."/>
            <person name="Ehrlich G.D."/>
            <person name="Rappuoli R."/>
            <person name="Moxon E.R."/>
            <person name="Masignani V."/>
        </authorList>
    </citation>
    <scope>NUCLEOTIDE SEQUENCE [LARGE SCALE GENOMIC DNA]</scope>
    <source>
        <strain>P1031</strain>
    </source>
</reference>
<keyword id="KW-0963">Cytoplasm</keyword>
<keyword id="KW-0251">Elongation factor</keyword>
<keyword id="KW-0342">GTP-binding</keyword>
<keyword id="KW-0547">Nucleotide-binding</keyword>
<keyword id="KW-0648">Protein biosynthesis</keyword>